<evidence type="ECO:0000255" key="1">
    <source>
        <dbReference type="HAMAP-Rule" id="MF_01632"/>
    </source>
</evidence>
<protein>
    <recommendedName>
        <fullName evidence="1">Probable chorismate pyruvate-lyase</fullName>
        <shortName evidence="1">CL</shortName>
        <shortName evidence="1">CPL</shortName>
        <ecNumber evidence="1">4.1.3.40</ecNumber>
    </recommendedName>
</protein>
<organism>
    <name type="scientific">Cupriavidus pinatubonensis (strain JMP 134 / LMG 1197)</name>
    <name type="common">Cupriavidus necator (strain JMP 134)</name>
    <dbReference type="NCBI Taxonomy" id="264198"/>
    <lineage>
        <taxon>Bacteria</taxon>
        <taxon>Pseudomonadati</taxon>
        <taxon>Pseudomonadota</taxon>
        <taxon>Betaproteobacteria</taxon>
        <taxon>Burkholderiales</taxon>
        <taxon>Burkholderiaceae</taxon>
        <taxon>Cupriavidus</taxon>
    </lineage>
</organism>
<name>UBIC_CUPPJ</name>
<sequence>MSAQYARRCGWTCHLPFDPTIPPNLRHWVTGEGSLTARLVAASERFRVRRLFQASARPFLDEWQVLGQCGREPALTREVLLICDEQPAIYAHTVVRERHARRDWPFLRGLGERPLGGRLFVDPAVRRDPFQFARLLPHHPLRQALLRILPAMAPVPMLPARRSVFRRGAGVMLVTEVFLPDLLTRPSRGLGQRY</sequence>
<reference key="1">
    <citation type="journal article" date="2010" name="PLoS ONE">
        <title>The complete multipartite genome sequence of Cupriavidus necator JMP134, a versatile pollutant degrader.</title>
        <authorList>
            <person name="Lykidis A."/>
            <person name="Perez-Pantoja D."/>
            <person name="Ledger T."/>
            <person name="Mavromatis K."/>
            <person name="Anderson I.J."/>
            <person name="Ivanova N.N."/>
            <person name="Hooper S.D."/>
            <person name="Lapidus A."/>
            <person name="Lucas S."/>
            <person name="Gonzalez B."/>
            <person name="Kyrpides N.C."/>
        </authorList>
    </citation>
    <scope>NUCLEOTIDE SEQUENCE [LARGE SCALE GENOMIC DNA]</scope>
    <source>
        <strain>JMP134 / LMG 1197</strain>
    </source>
</reference>
<feature type="chain" id="PRO_0000240566" description="Probable chorismate pyruvate-lyase">
    <location>
        <begin position="1"/>
        <end position="194"/>
    </location>
</feature>
<feature type="binding site" evidence="1">
    <location>
        <position position="77"/>
    </location>
    <ligand>
        <name>substrate</name>
    </ligand>
</feature>
<feature type="binding site" evidence="1">
    <location>
        <position position="115"/>
    </location>
    <ligand>
        <name>substrate</name>
    </ligand>
</feature>
<feature type="binding site" evidence="1">
    <location>
        <position position="176"/>
    </location>
    <ligand>
        <name>substrate</name>
    </ligand>
</feature>
<dbReference type="EC" id="4.1.3.40" evidence="1"/>
<dbReference type="EMBL" id="CP000090">
    <property type="protein sequence ID" value="AAZ62220.1"/>
    <property type="molecule type" value="Genomic_DNA"/>
</dbReference>
<dbReference type="SMR" id="Q46XB3"/>
<dbReference type="STRING" id="264198.Reut_A2859"/>
<dbReference type="KEGG" id="reu:Reut_A2859"/>
<dbReference type="eggNOG" id="COG3161">
    <property type="taxonomic scope" value="Bacteria"/>
</dbReference>
<dbReference type="HOGENOM" id="CLU_096824_2_0_4"/>
<dbReference type="OrthoDB" id="8606430at2"/>
<dbReference type="UniPathway" id="UPA00232"/>
<dbReference type="GO" id="GO:0005829">
    <property type="term" value="C:cytosol"/>
    <property type="evidence" value="ECO:0007669"/>
    <property type="project" value="TreeGrafter"/>
</dbReference>
<dbReference type="GO" id="GO:0008813">
    <property type="term" value="F:chorismate lyase activity"/>
    <property type="evidence" value="ECO:0007669"/>
    <property type="project" value="UniProtKB-UniRule"/>
</dbReference>
<dbReference type="GO" id="GO:0042866">
    <property type="term" value="P:pyruvate biosynthetic process"/>
    <property type="evidence" value="ECO:0007669"/>
    <property type="project" value="UniProtKB-UniRule"/>
</dbReference>
<dbReference type="GO" id="GO:0006744">
    <property type="term" value="P:ubiquinone biosynthetic process"/>
    <property type="evidence" value="ECO:0007669"/>
    <property type="project" value="UniProtKB-UniRule"/>
</dbReference>
<dbReference type="Gene3D" id="3.40.1410.10">
    <property type="entry name" value="Chorismate lyase-like"/>
    <property type="match status" value="1"/>
</dbReference>
<dbReference type="HAMAP" id="MF_01632">
    <property type="entry name" value="UbiC"/>
    <property type="match status" value="1"/>
</dbReference>
<dbReference type="InterPro" id="IPR007440">
    <property type="entry name" value="Chorismate--pyruvate_lyase"/>
</dbReference>
<dbReference type="InterPro" id="IPR028978">
    <property type="entry name" value="Chorismate_lyase_/UTRA_dom_sf"/>
</dbReference>
<dbReference type="PANTHER" id="PTHR38683">
    <property type="entry name" value="CHORISMATE PYRUVATE-LYASE"/>
    <property type="match status" value="1"/>
</dbReference>
<dbReference type="PANTHER" id="PTHR38683:SF1">
    <property type="entry name" value="CHORISMATE PYRUVATE-LYASE"/>
    <property type="match status" value="1"/>
</dbReference>
<dbReference type="Pfam" id="PF04345">
    <property type="entry name" value="Chor_lyase"/>
    <property type="match status" value="1"/>
</dbReference>
<dbReference type="SUPFAM" id="SSF64288">
    <property type="entry name" value="Chorismate lyase-like"/>
    <property type="match status" value="1"/>
</dbReference>
<gene>
    <name evidence="1" type="primary">ubiC</name>
    <name type="ordered locus">Reut_A2859</name>
</gene>
<accession>Q46XB3</accession>
<proteinExistence type="inferred from homology"/>
<keyword id="KW-0963">Cytoplasm</keyword>
<keyword id="KW-0456">Lyase</keyword>
<keyword id="KW-0670">Pyruvate</keyword>
<keyword id="KW-0831">Ubiquinone biosynthesis</keyword>
<comment type="function">
    <text evidence="1">Removes the pyruvyl group from chorismate, with concomitant aromatization of the ring, to provide 4-hydroxybenzoate (4HB) for the ubiquinone pathway.</text>
</comment>
<comment type="catalytic activity">
    <reaction evidence="1">
        <text>chorismate = 4-hydroxybenzoate + pyruvate</text>
        <dbReference type="Rhea" id="RHEA:16505"/>
        <dbReference type="ChEBI" id="CHEBI:15361"/>
        <dbReference type="ChEBI" id="CHEBI:17879"/>
        <dbReference type="ChEBI" id="CHEBI:29748"/>
        <dbReference type="EC" id="4.1.3.40"/>
    </reaction>
</comment>
<comment type="pathway">
    <text evidence="1">Cofactor biosynthesis; ubiquinone biosynthesis.</text>
</comment>
<comment type="subcellular location">
    <subcellularLocation>
        <location evidence="1">Cytoplasm</location>
    </subcellularLocation>
</comment>
<comment type="similarity">
    <text evidence="1">Belongs to the UbiC family.</text>
</comment>